<sequence>MKTLSPAVITLLWRQDAAEFYFSRLSHLPWAMLLHSGYADHPYSRFDIVVAEPICTLTTFGKETVVSESEKRTTTTDDPLQVLQQVLDRADIRPTHNEDLPFQGGALGLFGYDLGRRFESLPEIAEQDIVLPDMAVGIYDWALIVDHQRHTVSLLSHNDVNARRAWLESQQFSPQEDFTLTSDWQSNMTREQYGEKFRQVQEYLHSGDCYQVNLAQRFHATYSGDEWQAFLQLNQANRAPFSAFLRLEQGAILSLSPERFILCDNSEIQTRPIKGTLPRLPDPQEDSKQAVKLANSAKDRAENLMIVDLMRNDIGRVAVAGSVKVPELFVVEPFPAVHHLVSTITAQLPEQLHASDLLRAAFPGGSITGAPKVRAMEIIDELEPQRRNAWCGSIGYLSFCGNMDTSITIRTLTAINGQIFCSAGGGIVADSQEEAEYQETFDKVNRILKQLEK</sequence>
<organism>
    <name type="scientific">Escherichia coli (strain K12)</name>
    <dbReference type="NCBI Taxonomy" id="83333"/>
    <lineage>
        <taxon>Bacteria</taxon>
        <taxon>Pseudomonadati</taxon>
        <taxon>Pseudomonadota</taxon>
        <taxon>Gammaproteobacteria</taxon>
        <taxon>Enterobacterales</taxon>
        <taxon>Enterobacteriaceae</taxon>
        <taxon>Escherichia</taxon>
    </lineage>
</organism>
<dbReference type="EC" id="2.6.1.85"/>
<dbReference type="EMBL" id="K02673">
    <property type="protein sequence ID" value="AAA24266.1"/>
    <property type="molecule type" value="Genomic_DNA"/>
</dbReference>
<dbReference type="EMBL" id="U00096">
    <property type="protein sequence ID" value="AAC74882.1"/>
    <property type="molecule type" value="Genomic_DNA"/>
</dbReference>
<dbReference type="EMBL" id="AP009048">
    <property type="protein sequence ID" value="BAA15619.1"/>
    <property type="molecule type" value="Genomic_DNA"/>
</dbReference>
<dbReference type="EMBL" id="U07762">
    <property type="protein sequence ID" value="AAC43282.1"/>
    <property type="molecule type" value="Genomic_DNA"/>
</dbReference>
<dbReference type="EMBL" id="U07748">
    <property type="protein sequence ID" value="AAC43269.1"/>
    <property type="molecule type" value="Genomic_DNA"/>
</dbReference>
<dbReference type="EMBL" id="U07749">
    <property type="protein sequence ID" value="AAC43270.1"/>
    <property type="molecule type" value="Genomic_DNA"/>
</dbReference>
<dbReference type="PIR" id="A30251">
    <property type="entry name" value="AGEC1"/>
</dbReference>
<dbReference type="RefSeq" id="NP_416326.1">
    <property type="nucleotide sequence ID" value="NC_000913.3"/>
</dbReference>
<dbReference type="RefSeq" id="WP_000854958.1">
    <property type="nucleotide sequence ID" value="NZ_CP064677.1"/>
</dbReference>
<dbReference type="PDB" id="1K0E">
    <property type="method" value="X-ray"/>
    <property type="resolution" value="2.00 A"/>
    <property type="chains" value="A/B=1-453"/>
</dbReference>
<dbReference type="PDB" id="1K0G">
    <property type="method" value="X-ray"/>
    <property type="resolution" value="2.05 A"/>
    <property type="chains" value="A/B=1-453"/>
</dbReference>
<dbReference type="PDB" id="8RP0">
    <property type="method" value="X-ray"/>
    <property type="resolution" value="1.64 A"/>
    <property type="chains" value="CCC/DDD=1-453"/>
</dbReference>
<dbReference type="PDB" id="8RP1">
    <property type="method" value="X-ray"/>
    <property type="resolution" value="1.86 A"/>
    <property type="chains" value="CCC/DDD=1-453"/>
</dbReference>
<dbReference type="PDB" id="8RP2">
    <property type="method" value="X-ray"/>
    <property type="resolution" value="1.98 A"/>
    <property type="chains" value="CCC/DDD=1-453"/>
</dbReference>
<dbReference type="PDB" id="8RP6">
    <property type="method" value="X-ray"/>
    <property type="resolution" value="2.45 A"/>
    <property type="chains" value="CCC/DDD=1-453"/>
</dbReference>
<dbReference type="PDBsum" id="1K0E"/>
<dbReference type="PDBsum" id="1K0G"/>
<dbReference type="PDBsum" id="8RP0"/>
<dbReference type="PDBsum" id="8RP1"/>
<dbReference type="PDBsum" id="8RP2"/>
<dbReference type="PDBsum" id="8RP6"/>
<dbReference type="SMR" id="P05041"/>
<dbReference type="BioGRID" id="4260345">
    <property type="interactions" value="174"/>
</dbReference>
<dbReference type="BioGRID" id="850694">
    <property type="interactions" value="1"/>
</dbReference>
<dbReference type="ComplexPortal" id="CPX-5245">
    <property type="entry name" value="Aminodeoxychorismate synthase complex"/>
</dbReference>
<dbReference type="DIP" id="DIP-10434N"/>
<dbReference type="FunCoup" id="P05041">
    <property type="interactions" value="285"/>
</dbReference>
<dbReference type="IntAct" id="P05041">
    <property type="interactions" value="6"/>
</dbReference>
<dbReference type="STRING" id="511145.b1812"/>
<dbReference type="DrugBank" id="DB01942">
    <property type="generic name" value="Formic acid"/>
</dbReference>
<dbReference type="jPOST" id="P05041"/>
<dbReference type="PaxDb" id="511145-b1812"/>
<dbReference type="EnsemblBacteria" id="AAC74882">
    <property type="protein sequence ID" value="AAC74882"/>
    <property type="gene ID" value="b1812"/>
</dbReference>
<dbReference type="GeneID" id="946337"/>
<dbReference type="KEGG" id="ecj:JW1801"/>
<dbReference type="KEGG" id="eco:b1812"/>
<dbReference type="PATRIC" id="fig|511145.12.peg.1889"/>
<dbReference type="EchoBASE" id="EB0677"/>
<dbReference type="eggNOG" id="COG0147">
    <property type="taxonomic scope" value="Bacteria"/>
</dbReference>
<dbReference type="HOGENOM" id="CLU_006493_7_2_6"/>
<dbReference type="InParanoid" id="P05041"/>
<dbReference type="PhylomeDB" id="P05041"/>
<dbReference type="BioCyc" id="EcoCyc:PABASYN-COMPI-MONOMER"/>
<dbReference type="BioCyc" id="MetaCyc:PABASYN-COMPI-MONOMER"/>
<dbReference type="BRENDA" id="2.6.1.85">
    <property type="organism ID" value="2026"/>
</dbReference>
<dbReference type="SABIO-RK" id="P05041"/>
<dbReference type="STRENDA-DB" id="JZWKU8">
    <property type="experiment" value="Glutamine-dependent formation of aminodeoxychorismate by aminodeoxychorismate synthase from Escherichia coli"/>
</dbReference>
<dbReference type="UniPathway" id="UPA00077">
    <property type="reaction ID" value="UER00149"/>
</dbReference>
<dbReference type="EvolutionaryTrace" id="P05041"/>
<dbReference type="PRO" id="PR:P05041"/>
<dbReference type="Proteomes" id="UP000000625">
    <property type="component" value="Chromosome"/>
</dbReference>
<dbReference type="GO" id="GO:0009356">
    <property type="term" value="C:aminodeoxychorismate synthase complex"/>
    <property type="evidence" value="ECO:0000314"/>
    <property type="project" value="EcoCyc"/>
</dbReference>
<dbReference type="GO" id="GO:0046820">
    <property type="term" value="F:4-amino-4-deoxychorismate synthase activity"/>
    <property type="evidence" value="ECO:0000314"/>
    <property type="project" value="UniProtKB"/>
</dbReference>
<dbReference type="GO" id="GO:0000287">
    <property type="term" value="F:magnesium ion binding"/>
    <property type="evidence" value="ECO:0000314"/>
    <property type="project" value="UniProtKB"/>
</dbReference>
<dbReference type="GO" id="GO:0046982">
    <property type="term" value="F:protein heterodimerization activity"/>
    <property type="evidence" value="ECO:0000353"/>
    <property type="project" value="EcoCyc"/>
</dbReference>
<dbReference type="GO" id="GO:0120284">
    <property type="term" value="F:tryptophan binding"/>
    <property type="evidence" value="ECO:0000314"/>
    <property type="project" value="EcoCyc"/>
</dbReference>
<dbReference type="GO" id="GO:0008153">
    <property type="term" value="P:4-aminobenzoate biosynthetic process"/>
    <property type="evidence" value="ECO:0000315"/>
    <property type="project" value="EcoCyc"/>
</dbReference>
<dbReference type="GO" id="GO:0046656">
    <property type="term" value="P:folic acid biosynthetic process"/>
    <property type="evidence" value="ECO:0000314"/>
    <property type="project" value="ComplexPortal"/>
</dbReference>
<dbReference type="GO" id="GO:0000162">
    <property type="term" value="P:L-tryptophan biosynthetic process"/>
    <property type="evidence" value="ECO:0000318"/>
    <property type="project" value="GO_Central"/>
</dbReference>
<dbReference type="GO" id="GO:0046654">
    <property type="term" value="P:tetrahydrofolate biosynthetic process"/>
    <property type="evidence" value="ECO:0000314"/>
    <property type="project" value="UniProtKB"/>
</dbReference>
<dbReference type="FunFam" id="3.60.120.10:FF:000004">
    <property type="entry name" value="Aminodeoxychorismate synthase, component I"/>
    <property type="match status" value="1"/>
</dbReference>
<dbReference type="Gene3D" id="3.60.120.10">
    <property type="entry name" value="Anthranilate synthase"/>
    <property type="match status" value="1"/>
</dbReference>
<dbReference type="InterPro" id="IPR005802">
    <property type="entry name" value="ADC_synth_comp_1"/>
</dbReference>
<dbReference type="InterPro" id="IPR005801">
    <property type="entry name" value="ADC_synthase"/>
</dbReference>
<dbReference type="InterPro" id="IPR019999">
    <property type="entry name" value="Anth_synth_I-like"/>
</dbReference>
<dbReference type="InterPro" id="IPR006805">
    <property type="entry name" value="Anth_synth_I_N"/>
</dbReference>
<dbReference type="InterPro" id="IPR015890">
    <property type="entry name" value="Chorismate_C"/>
</dbReference>
<dbReference type="NCBIfam" id="TIGR00553">
    <property type="entry name" value="pabB"/>
    <property type="match status" value="1"/>
</dbReference>
<dbReference type="NCBIfam" id="NF012009">
    <property type="entry name" value="PRK15465.1"/>
    <property type="match status" value="1"/>
</dbReference>
<dbReference type="PANTHER" id="PTHR11236">
    <property type="entry name" value="AMINOBENZOATE/ANTHRANILATE SYNTHASE"/>
    <property type="match status" value="1"/>
</dbReference>
<dbReference type="PANTHER" id="PTHR11236:SF50">
    <property type="entry name" value="AMINODEOXYCHORISMATE SYNTHASE COMPONENT 1"/>
    <property type="match status" value="1"/>
</dbReference>
<dbReference type="Pfam" id="PF04715">
    <property type="entry name" value="Anth_synt_I_N"/>
    <property type="match status" value="1"/>
</dbReference>
<dbReference type="Pfam" id="PF00425">
    <property type="entry name" value="Chorismate_bind"/>
    <property type="match status" value="1"/>
</dbReference>
<dbReference type="PRINTS" id="PR00095">
    <property type="entry name" value="ANTSNTHASEI"/>
</dbReference>
<dbReference type="SUPFAM" id="SSF56322">
    <property type="entry name" value="ADC synthase"/>
    <property type="match status" value="1"/>
</dbReference>
<proteinExistence type="evidence at protein level"/>
<gene>
    <name type="primary">pabB</name>
    <name type="ordered locus">b1812</name>
    <name type="ordered locus">JW1801</name>
</gene>
<evidence type="ECO:0000269" key="1">
    <source>
    </source>
</evidence>
<evidence type="ECO:0000269" key="2">
    <source>
    </source>
</evidence>
<evidence type="ECO:0000269" key="3">
    <source>
    </source>
</evidence>
<evidence type="ECO:0000269" key="4">
    <source>
    </source>
</evidence>
<evidence type="ECO:0000269" key="5">
    <source>
    </source>
</evidence>
<evidence type="ECO:0000269" key="6">
    <source>
    </source>
</evidence>
<evidence type="ECO:0000269" key="7">
    <source>
    </source>
</evidence>
<evidence type="ECO:0000269" key="8">
    <source>
    </source>
</evidence>
<evidence type="ECO:0000305" key="9"/>
<evidence type="ECO:0000305" key="10">
    <source>
    </source>
</evidence>
<evidence type="ECO:0000305" key="11">
    <source>
    </source>
</evidence>
<evidence type="ECO:0007829" key="12">
    <source>
        <dbReference type="PDB" id="1K0E"/>
    </source>
</evidence>
<evidence type="ECO:0007829" key="13">
    <source>
        <dbReference type="PDB" id="1K0G"/>
    </source>
</evidence>
<name>PABB_ECOLI</name>
<protein>
    <recommendedName>
        <fullName>Aminodeoxychorismate synthase component 1</fullName>
        <shortName>ADC synthase</shortName>
        <shortName>ADCS</shortName>
        <ecNumber>2.6.1.85</ecNumber>
    </recommendedName>
    <alternativeName>
        <fullName>4-amino-4-deoxychorismate synthase component 1</fullName>
    </alternativeName>
</protein>
<feature type="chain" id="PRO_0000154136" description="Aminodeoxychorismate synthase component 1">
    <location>
        <begin position="1"/>
        <end position="453"/>
    </location>
</feature>
<feature type="active site" description="Proton donor">
    <location>
        <position position="258"/>
    </location>
</feature>
<feature type="active site" description="N6-(4-deoxychorismate)-lysine intermediate">
    <location>
        <position position="274"/>
    </location>
</feature>
<feature type="binding site" evidence="1">
    <location>
        <position position="36"/>
    </location>
    <ligand>
        <name>L-tryptophan</name>
        <dbReference type="ChEBI" id="CHEBI:57912"/>
    </ligand>
</feature>
<feature type="binding site">
    <location>
        <begin position="43"/>
        <end position="46"/>
    </location>
    <ligand>
        <name>L-tryptophan</name>
        <dbReference type="ChEBI" id="CHEBI:57912"/>
    </ligand>
</feature>
<feature type="binding site">
    <location>
        <begin position="240"/>
        <end position="242"/>
    </location>
    <ligand>
        <name>L-tryptophan</name>
        <dbReference type="ChEBI" id="CHEBI:57912"/>
    </ligand>
</feature>
<feature type="mutagenesis site" description="The reaction is extremely slow." evidence="4">
    <original>E</original>
    <variation>A</variation>
    <location>
        <position position="258"/>
    </location>
</feature>
<feature type="mutagenesis site" description="The reaction is extremely slow." evidence="4">
    <original>E</original>
    <variation>D</variation>
    <location>
        <position position="258"/>
    </location>
</feature>
<feature type="mutagenesis site" description="Absence of covalent intermediate. Addition of ammonia allows the formation of the covalent intermediate and shows that ammonia can replace the function of K-274. Reduced catalytic efficiency." evidence="2 4">
    <original>K</original>
    <variation>A</variation>
    <location>
        <position position="274"/>
    </location>
</feature>
<feature type="mutagenesis site" description="Absence of covalent intermediate." evidence="2 4">
    <original>K</original>
    <variation>R</variation>
    <location>
        <position position="274"/>
    </location>
</feature>
<feature type="mutagenesis site" description="Reduced catalytic efficiency." evidence="2 4">
    <original>K</original>
    <variation>R</variation>
    <location>
        <position position="274"/>
    </location>
</feature>
<feature type="mutagenesis site" description="Catalytically inactive for both the glutamine-dependent and ammonia-dependent reactions and fails to interact with PabA." evidence="8">
    <original>G</original>
    <variation>S</variation>
    <location>
        <position position="275"/>
    </location>
</feature>
<feature type="mutagenesis site" description="Catalytically active in the NH3-dependent, but inactive for the glutamine-dependent reactions and fails to complex with PabA." evidence="8">
    <original>R</original>
    <variation>K</variation>
    <location>
        <position position="311"/>
    </location>
</feature>
<feature type="mutagenesis site" description="Catalytically inactive for both the glutamine-dependent and ammonia-dependent reactions and fails to interact with PabA." evidence="8">
    <original>R</original>
    <variation>H</variation>
    <location>
        <position position="316"/>
    </location>
</feature>
<feature type="mutagenesis site" description="Complete loss of aminodeoxychorismate synthase activity." evidence="8">
    <original>S</original>
    <variation>T</variation>
    <location>
        <position position="322"/>
    </location>
</feature>
<feature type="mutagenesis site" description="Catalytically inactive for both the glutamine-dependent and ammonia-dependent reactions and fails to interact with PabA." evidence="8">
    <original>H</original>
    <variation>W</variation>
    <location>
        <position position="339"/>
    </location>
</feature>
<feature type="strand" evidence="12">
    <location>
        <begin position="7"/>
        <end position="11"/>
    </location>
</feature>
<feature type="helix" evidence="12">
    <location>
        <begin position="17"/>
        <end position="22"/>
    </location>
</feature>
<feature type="turn" evidence="12">
    <location>
        <begin position="23"/>
        <end position="27"/>
    </location>
</feature>
<feature type="strand" evidence="12">
    <location>
        <begin position="32"/>
        <end position="35"/>
    </location>
</feature>
<feature type="helix" evidence="13">
    <location>
        <begin position="42"/>
        <end position="44"/>
    </location>
</feature>
<feature type="strand" evidence="12">
    <location>
        <begin position="46"/>
        <end position="50"/>
    </location>
</feature>
<feature type="strand" evidence="12">
    <location>
        <begin position="54"/>
        <end position="60"/>
    </location>
</feature>
<feature type="strand" evidence="12">
    <location>
        <begin position="63"/>
        <end position="68"/>
    </location>
</feature>
<feature type="strand" evidence="12">
    <location>
        <begin position="71"/>
        <end position="75"/>
    </location>
</feature>
<feature type="helix" evidence="12">
    <location>
        <begin position="79"/>
        <end position="89"/>
    </location>
</feature>
<feature type="strand" evidence="12">
    <location>
        <begin position="104"/>
        <end position="110"/>
    </location>
</feature>
<feature type="helix" evidence="12">
    <location>
        <begin position="112"/>
        <end position="117"/>
    </location>
</feature>
<feature type="strand" evidence="12">
    <location>
        <begin position="133"/>
        <end position="146"/>
    </location>
</feature>
<feature type="turn" evidence="12">
    <location>
        <begin position="147"/>
        <end position="150"/>
    </location>
</feature>
<feature type="strand" evidence="12">
    <location>
        <begin position="151"/>
        <end position="158"/>
    </location>
</feature>
<feature type="helix" evidence="12">
    <location>
        <begin position="160"/>
        <end position="169"/>
    </location>
</feature>
<feature type="strand" evidence="12">
    <location>
        <begin position="185"/>
        <end position="188"/>
    </location>
</feature>
<feature type="helix" evidence="12">
    <location>
        <begin position="190"/>
        <end position="205"/>
    </location>
</feature>
<feature type="strand" evidence="12">
    <location>
        <begin position="212"/>
        <end position="224"/>
    </location>
</feature>
<feature type="helix" evidence="12">
    <location>
        <begin position="226"/>
        <end position="237"/>
    </location>
</feature>
<feature type="strand" evidence="12">
    <location>
        <begin position="241"/>
        <end position="246"/>
    </location>
</feature>
<feature type="strand" evidence="12">
    <location>
        <begin position="251"/>
        <end position="256"/>
    </location>
</feature>
<feature type="strand" evidence="12">
    <location>
        <begin position="261"/>
        <end position="264"/>
    </location>
</feature>
<feature type="strand" evidence="12">
    <location>
        <begin position="267"/>
        <end position="270"/>
    </location>
</feature>
<feature type="strand" evidence="12">
    <location>
        <begin position="273"/>
        <end position="278"/>
    </location>
</feature>
<feature type="turn" evidence="12">
    <location>
        <begin position="297"/>
        <end position="301"/>
    </location>
</feature>
<feature type="helix" evidence="12">
    <location>
        <begin position="302"/>
        <end position="314"/>
    </location>
</feature>
<feature type="turn" evidence="12">
    <location>
        <begin position="315"/>
        <end position="317"/>
    </location>
</feature>
<feature type="strand" evidence="12">
    <location>
        <begin position="324"/>
        <end position="333"/>
    </location>
</feature>
<feature type="strand" evidence="12">
    <location>
        <begin position="335"/>
        <end position="347"/>
    </location>
</feature>
<feature type="helix" evidence="12">
    <location>
        <begin position="354"/>
        <end position="361"/>
    </location>
</feature>
<feature type="helix" evidence="12">
    <location>
        <begin position="365"/>
        <end position="367"/>
    </location>
</feature>
<feature type="strand" evidence="13">
    <location>
        <begin position="369"/>
        <end position="371"/>
    </location>
</feature>
<feature type="helix" evidence="12">
    <location>
        <begin position="372"/>
        <end position="382"/>
    </location>
</feature>
<feature type="strand" evidence="12">
    <location>
        <begin position="383"/>
        <end position="385"/>
    </location>
</feature>
<feature type="turn" evidence="12">
    <location>
        <begin position="388"/>
        <end position="391"/>
    </location>
</feature>
<feature type="strand" evidence="12">
    <location>
        <begin position="392"/>
        <end position="398"/>
    </location>
</feature>
<feature type="strand" evidence="12">
    <location>
        <begin position="403"/>
        <end position="406"/>
    </location>
</feature>
<feature type="strand" evidence="12">
    <location>
        <begin position="410"/>
        <end position="415"/>
    </location>
</feature>
<feature type="strand" evidence="12">
    <location>
        <begin position="418"/>
        <end position="427"/>
    </location>
</feature>
<feature type="helix" evidence="12">
    <location>
        <begin position="433"/>
        <end position="451"/>
    </location>
</feature>
<reference key="1">
    <citation type="journal article" date="1984" name="J. Bacteriol.">
        <title>Nucleotide sequence of Escherichia coli pabB indicates a common evolutionary origin of p-aminobenzoate synthetase and anthranilate synthetase.</title>
        <authorList>
            <person name="Goncharoff P."/>
            <person name="Nichols B.P."/>
        </authorList>
    </citation>
    <scope>NUCLEOTIDE SEQUENCE [GENOMIC DNA]</scope>
</reference>
<reference key="2">
    <citation type="journal article" date="1996" name="DNA Res.">
        <title>A 460-kb DNA sequence of the Escherichia coli K-12 genome corresponding to the 40.1-50.0 min region on the linkage map.</title>
        <authorList>
            <person name="Itoh T."/>
            <person name="Aiba H."/>
            <person name="Baba T."/>
            <person name="Fujita K."/>
            <person name="Hayashi K."/>
            <person name="Inada T."/>
            <person name="Isono K."/>
            <person name="Kasai H."/>
            <person name="Kimura S."/>
            <person name="Kitakawa M."/>
            <person name="Kitagawa M."/>
            <person name="Makino K."/>
            <person name="Miki T."/>
            <person name="Mizobuchi K."/>
            <person name="Mori H."/>
            <person name="Mori T."/>
            <person name="Motomura K."/>
            <person name="Nakade S."/>
            <person name="Nakamura Y."/>
            <person name="Nashimoto H."/>
            <person name="Nishio Y."/>
            <person name="Oshima T."/>
            <person name="Saito N."/>
            <person name="Sampei G."/>
            <person name="Seki Y."/>
            <person name="Sivasundaram S."/>
            <person name="Tagami H."/>
            <person name="Takeda J."/>
            <person name="Takemoto K."/>
            <person name="Wada C."/>
            <person name="Yamamoto Y."/>
            <person name="Horiuchi T."/>
        </authorList>
    </citation>
    <scope>NUCLEOTIDE SEQUENCE [LARGE SCALE GENOMIC DNA]</scope>
    <source>
        <strain>K12 / W3110 / ATCC 27325 / DSM 5911</strain>
    </source>
</reference>
<reference key="3">
    <citation type="journal article" date="1997" name="Science">
        <title>The complete genome sequence of Escherichia coli K-12.</title>
        <authorList>
            <person name="Blattner F.R."/>
            <person name="Plunkett G. III"/>
            <person name="Bloch C.A."/>
            <person name="Perna N.T."/>
            <person name="Burland V."/>
            <person name="Riley M."/>
            <person name="Collado-Vides J."/>
            <person name="Glasner J.D."/>
            <person name="Rode C.K."/>
            <person name="Mayhew G.F."/>
            <person name="Gregor J."/>
            <person name="Davis N.W."/>
            <person name="Kirkpatrick H.A."/>
            <person name="Goeden M.A."/>
            <person name="Rose D.J."/>
            <person name="Mau B."/>
            <person name="Shao Y."/>
        </authorList>
    </citation>
    <scope>NUCLEOTIDE SEQUENCE [LARGE SCALE GENOMIC DNA]</scope>
    <source>
        <strain>K12 / MG1655 / ATCC 47076</strain>
    </source>
</reference>
<reference key="4">
    <citation type="journal article" date="2006" name="Mol. Syst. Biol.">
        <title>Highly accurate genome sequences of Escherichia coli K-12 strains MG1655 and W3110.</title>
        <authorList>
            <person name="Hayashi K."/>
            <person name="Morooka N."/>
            <person name="Yamamoto Y."/>
            <person name="Fujita K."/>
            <person name="Isono K."/>
            <person name="Choi S."/>
            <person name="Ohtsubo E."/>
            <person name="Baba T."/>
            <person name="Wanner B.L."/>
            <person name="Mori H."/>
            <person name="Horiuchi T."/>
        </authorList>
    </citation>
    <scope>NUCLEOTIDE SEQUENCE [LARGE SCALE GENOMIC DNA]</scope>
    <source>
        <strain>K12 / W3110 / ATCC 27325 / DSM 5911</strain>
    </source>
</reference>
<reference key="5">
    <citation type="journal article" date="1994" name="Genetics">
        <title>Detecting selective sweeps in naturally occurring Escherichia coli.</title>
        <authorList>
            <person name="Guttman D.S."/>
            <person name="Dykhuizen D.E."/>
        </authorList>
    </citation>
    <scope>NUCLEOTIDE SEQUENCE [GENOMIC DNA] OF 42-377</scope>
    <source>
        <strain>ECOR 10</strain>
        <strain>ECOR 16</strain>
        <strain>ECOR 8</strain>
    </source>
</reference>
<reference key="6">
    <citation type="journal article" date="1970" name="J. Bacteriol.">
        <title>Biosynthesis of 4-aminobenzoate in Escherichia coli.</title>
        <authorList>
            <person name="Huang M."/>
            <person name="Gibson F."/>
        </authorList>
    </citation>
    <scope>FUNCTION</scope>
    <scope>DISRUPTION PHENOTYPE</scope>
    <scope>NOMENCLATURE</scope>
</reference>
<reference key="7">
    <citation type="journal article" date="1990" name="Proc. Natl. Acad. Sci. U.S.A.">
        <title>p-aminobenzoate synthesis in Escherichia coli: purification and characterization of PabB as aminodeoxychorismate synthase and enzyme X as aminodeoxychorismate lyase.</title>
        <authorList>
            <person name="Ye Q.-Z."/>
            <person name="Liu J."/>
            <person name="Walsh C.T."/>
        </authorList>
    </citation>
    <scope>PROTEIN SEQUENCE OF 1-12</scope>
    <scope>FUNCTION</scope>
    <scope>CATALYTIC ACTIVITY</scope>
    <scope>COFACTOR</scope>
</reference>
<reference key="8">
    <citation type="journal article" date="1995" name="J. Bacteriol.">
        <title>Kinetic characterization of 4-amino 4-deoxychorismate synthase from Escherichia coli.</title>
        <authorList>
            <person name="Viswanathan V.K."/>
            <person name="Green J.M."/>
            <person name="Nichols B.P."/>
        </authorList>
    </citation>
    <scope>BIOPHYSICOCHEMICAL PROPERTIES</scope>
    <scope>ACTIVITY REGULATION</scope>
</reference>
<reference key="9">
    <citation type="journal article" date="1996" name="Biochim. Biophys. Acta">
        <title>Escherichia coli aminodeoxychorismate synthase: analysis of pabB mutations affecting catalysis and subunit association.</title>
        <authorList>
            <person name="Rayl E.A."/>
            <person name="Green J.M."/>
            <person name="Nichols B.P."/>
        </authorList>
    </citation>
    <scope>MUTAGENESIS OF GLY-275; ARG-311; ARG-316; SER-322 AND HIS-339</scope>
    <scope>SUBUNIT</scope>
</reference>
<reference key="10">
    <citation type="journal article" date="2004" name="J. Am. Chem. Soc.">
        <title>Conservation of mechanism in three chorismate-utilizing enzymes.</title>
        <authorList>
            <person name="He Z."/>
            <person name="Stigers Lavoie K.D."/>
            <person name="Bartlett P.A."/>
            <person name="Toney M.D."/>
        </authorList>
    </citation>
    <scope>MUTAGENESIS OF LYS-274</scope>
    <scope>REACTION MECHANISM</scope>
    <scope>ACTIVE SITE</scope>
    <scope>BIOPHYSICOCHEMICAL PROPERTIES</scope>
</reference>
<reference key="11">
    <citation type="journal article" date="2004" name="J. Am. Chem. Soc.">
        <title>Identification of 4-amino-4-deoxychorismate synthase as the molecular target for the antimicrobial action of (6s)-6-fluoroshikimate.</title>
        <authorList>
            <person name="Bulloch E.M."/>
            <person name="Jones M.A."/>
            <person name="Parker E.J."/>
            <person name="Osborne A.P."/>
            <person name="Stephens E."/>
            <person name="Davies G.M."/>
            <person name="Coggins J.R."/>
            <person name="Abell C."/>
        </authorList>
    </citation>
    <scope>ACTIVITY REGULATION</scope>
</reference>
<reference key="12">
    <citation type="journal article" date="2006" name="Biochemistry">
        <title>Direct detection and kinetic analysis of covalent intermediate formation in the 4-amino-4-deoxychorismate synthase catalyzed reaction.</title>
        <authorList>
            <person name="He Z."/>
            <person name="Toney M.D."/>
        </authorList>
    </citation>
    <scope>FUNCTION</scope>
    <scope>CATALYTIC ACTIVITY</scope>
    <scope>MUTAGENESIS OF GLU-258 AND LYS-274</scope>
    <scope>REACTION MECHANISM</scope>
    <scope>ACTIVE SITE</scope>
    <scope>BIOPHYSICOCHEMICAL PROPERTIES</scope>
</reference>
<reference key="13">
    <citation type="journal article" date="2002" name="Biochemistry">
        <title>Structure of Escherichia coli aminodeoxychorismate synthase: architectural conservation and diversity in chorismate-utilizing enzymes.</title>
        <authorList>
            <person name="Parsons J.F."/>
            <person name="Jensen P.Y."/>
            <person name="Pachikara A.S."/>
            <person name="Howard A.J."/>
            <person name="Eisenstein E."/>
            <person name="Ladner J.E."/>
        </authorList>
    </citation>
    <scope>X-RAY CRYSTALLOGRAPHY (2.0 ANGSTROMS) IN COMPLEX WITH TRYPTOPHAN</scope>
    <scope>ACTIVE SITE</scope>
    <scope>SUBUNIT</scope>
</reference>
<accession>P05041</accession>
<comment type="function">
    <text evidence="4 5 6">Part of a heterodimeric complex that catalyzes the two-step biosynthesis of 4-amino-4-deoxychorismate (ADC), a precursor of p-aminobenzoate (PABA) and tetrahydrofolate. In the first step, a glutamine amidotransferase (PabA) generates ammonia as a substrate that, along with chorismate, is used in the second step, catalyzed by aminodeoxychorismate synthase (PabB) to produce ADC. PabB, in the absence of PabA, can catalyze the formation of ADC in the presence of exogenous ammonia.</text>
</comment>
<comment type="catalytic activity">
    <reaction evidence="4 5">
        <text>chorismate + L-glutamine = 4-amino-4-deoxychorismate + L-glutamate</text>
        <dbReference type="Rhea" id="RHEA:11672"/>
        <dbReference type="ChEBI" id="CHEBI:29748"/>
        <dbReference type="ChEBI" id="CHEBI:29985"/>
        <dbReference type="ChEBI" id="CHEBI:58359"/>
        <dbReference type="ChEBI" id="CHEBI:58406"/>
        <dbReference type="EC" id="2.6.1.85"/>
    </reaction>
</comment>
<comment type="cofactor">
    <cofactor evidence="5">
        <name>Mg(2+)</name>
        <dbReference type="ChEBI" id="CHEBI:18420"/>
    </cofactor>
</comment>
<comment type="activity regulation">
    <text evidence="3 7">Inhibited by 6-diazo-5-oxo-L-norleucine (DON). The inhibition is competitive with glutamine but uncompetitive with chorismate. Also inhibited by 2-fluorochorismate.</text>
</comment>
<comment type="biophysicochemical properties">
    <kinetics>
        <KM evidence="2 4 7">4.2 uM for chorismate (with PabA and glutamine as the amino donor at pH 7.5)</KM>
        <KM evidence="2 4 7">18.6 uM for chorismate (with PabA and ammonia as the amino donor at pH 7.5)</KM>
        <KM evidence="2 4 7">71 uM for chorismate</KM>
        <KM evidence="2 4 7">75 uM for chorismate (with PabA)</KM>
        <KM evidence="2 4 7">379 uM for chorismate (with PabA and ammonia)</KM>
        <KM evidence="2 4 7">388 uM for chorismate (with ammonia)</KM>
    </kinetics>
</comment>
<comment type="pathway">
    <text>Cofactor biosynthesis; tetrahydrofolate biosynthesis; 4-aminobenzoate from chorismate: step 1/2.</text>
</comment>
<comment type="subunit">
    <text evidence="1 8">Monomer. Heterodimer consisting of two non-identical subunits: a glutamine amidotransferase subunit (PabA) and a aminodeoxychorismate synthase subunit (PabB).</text>
</comment>
<comment type="disruption phenotype">
    <text evidence="6">Cells lacking this gene do not produce 4-aminobenzoate.</text>
</comment>
<comment type="miscellaneous">
    <text evidence="10 11">In this enzymatic reaction the C4 hydroxy group of chorismate is replaced by addition of a nucleophile at the C2 position. The nucleophile is the epsilon-amino group of lysine 274 transiently binds to C2 of chorismate (PubMed:16605270). PabB contains a tryptophan (Trp) molecule deeply embedded in a binding pocket. Trp which cannot be dissociated without denaturation of PabB, may play a structural role in the enzyme since it has no effect on the enzymic synthesis of aminodeoxychorismate (PubMed:11841211).</text>
</comment>
<comment type="similarity">
    <text evidence="9">Belongs to the anthranilate synthase component I family.</text>
</comment>
<keyword id="KW-0002">3D-structure</keyword>
<keyword id="KW-0903">Direct protein sequencing</keyword>
<keyword id="KW-0289">Folate biosynthesis</keyword>
<keyword id="KW-0460">Magnesium</keyword>
<keyword id="KW-1185">Reference proteome</keyword>
<keyword id="KW-0808">Transferase</keyword>